<sequence length="242" mass="26419">MVTPKFRRVILKLSGEALAGQKGYGIDPEVVYSIASQIKDVLEHRVQLAIVVGGGNIWRGISGSTKGMDRATADYMGMLATVINSLALQDALEKIEVDTRVQTSFEMRAVAETYIRRRAIRHMEKGRVVIFAAGTGNPYFSTDTTAALRAAEVEAEIILMAKQVDGVYDADPLKHPGAKRFDELTYIDVLNRGLQVMDSTAVSLCMDNKIPLLVFDLNTEGNIKRAILGERIGTFVGGDLNG</sequence>
<proteinExistence type="inferred from homology"/>
<accession>A4J5Z1</accession>
<name>PYRH_DESRM</name>
<keyword id="KW-0021">Allosteric enzyme</keyword>
<keyword id="KW-0067">ATP-binding</keyword>
<keyword id="KW-0963">Cytoplasm</keyword>
<keyword id="KW-0418">Kinase</keyword>
<keyword id="KW-0547">Nucleotide-binding</keyword>
<keyword id="KW-0665">Pyrimidine biosynthesis</keyword>
<keyword id="KW-1185">Reference proteome</keyword>
<keyword id="KW-0808">Transferase</keyword>
<reference key="1">
    <citation type="submission" date="2007-03" db="EMBL/GenBank/DDBJ databases">
        <title>Complete sequence of Desulfotomaculum reducens MI-1.</title>
        <authorList>
            <consortium name="US DOE Joint Genome Institute"/>
            <person name="Copeland A."/>
            <person name="Lucas S."/>
            <person name="Lapidus A."/>
            <person name="Barry K."/>
            <person name="Detter J.C."/>
            <person name="Glavina del Rio T."/>
            <person name="Hammon N."/>
            <person name="Israni S."/>
            <person name="Dalin E."/>
            <person name="Tice H."/>
            <person name="Pitluck S."/>
            <person name="Sims D."/>
            <person name="Brettin T."/>
            <person name="Bruce D."/>
            <person name="Han C."/>
            <person name="Tapia R."/>
            <person name="Schmutz J."/>
            <person name="Larimer F."/>
            <person name="Land M."/>
            <person name="Hauser L."/>
            <person name="Kyrpides N."/>
            <person name="Kim E."/>
            <person name="Tebo B.M."/>
            <person name="Richardson P."/>
        </authorList>
    </citation>
    <scope>NUCLEOTIDE SEQUENCE [LARGE SCALE GENOMIC DNA]</scope>
    <source>
        <strain>ATCC BAA-1160 / DSM 100696 / MI-1</strain>
    </source>
</reference>
<feature type="chain" id="PRO_1000073139" description="Uridylate kinase">
    <location>
        <begin position="1"/>
        <end position="242"/>
    </location>
</feature>
<feature type="region of interest" description="Involved in allosteric activation by GTP" evidence="1">
    <location>
        <begin position="20"/>
        <end position="25"/>
    </location>
</feature>
<feature type="binding site" evidence="1">
    <location>
        <begin position="12"/>
        <end position="15"/>
    </location>
    <ligand>
        <name>ATP</name>
        <dbReference type="ChEBI" id="CHEBI:30616"/>
    </ligand>
</feature>
<feature type="binding site" evidence="1">
    <location>
        <position position="54"/>
    </location>
    <ligand>
        <name>UMP</name>
        <dbReference type="ChEBI" id="CHEBI:57865"/>
    </ligand>
</feature>
<feature type="binding site" evidence="1">
    <location>
        <position position="55"/>
    </location>
    <ligand>
        <name>ATP</name>
        <dbReference type="ChEBI" id="CHEBI:30616"/>
    </ligand>
</feature>
<feature type="binding site" evidence="1">
    <location>
        <position position="59"/>
    </location>
    <ligand>
        <name>ATP</name>
        <dbReference type="ChEBI" id="CHEBI:30616"/>
    </ligand>
</feature>
<feature type="binding site" evidence="1">
    <location>
        <position position="74"/>
    </location>
    <ligand>
        <name>UMP</name>
        <dbReference type="ChEBI" id="CHEBI:57865"/>
    </ligand>
</feature>
<feature type="binding site" evidence="1">
    <location>
        <begin position="135"/>
        <end position="142"/>
    </location>
    <ligand>
        <name>UMP</name>
        <dbReference type="ChEBI" id="CHEBI:57865"/>
    </ligand>
</feature>
<feature type="binding site" evidence="1">
    <location>
        <position position="163"/>
    </location>
    <ligand>
        <name>ATP</name>
        <dbReference type="ChEBI" id="CHEBI:30616"/>
    </ligand>
</feature>
<feature type="binding site" evidence="1">
    <location>
        <position position="168"/>
    </location>
    <ligand>
        <name>ATP</name>
        <dbReference type="ChEBI" id="CHEBI:30616"/>
    </ligand>
</feature>
<feature type="binding site" evidence="1">
    <location>
        <position position="171"/>
    </location>
    <ligand>
        <name>ATP</name>
        <dbReference type="ChEBI" id="CHEBI:30616"/>
    </ligand>
</feature>
<protein>
    <recommendedName>
        <fullName evidence="1">Uridylate kinase</fullName>
        <shortName evidence="1">UK</shortName>
        <ecNumber evidence="1">2.7.4.22</ecNumber>
    </recommendedName>
    <alternativeName>
        <fullName evidence="1">Uridine monophosphate kinase</fullName>
        <shortName evidence="1">UMP kinase</shortName>
        <shortName evidence="1">UMPK</shortName>
    </alternativeName>
</protein>
<comment type="function">
    <text evidence="1">Catalyzes the reversible phosphorylation of UMP to UDP.</text>
</comment>
<comment type="catalytic activity">
    <reaction evidence="1">
        <text>UMP + ATP = UDP + ADP</text>
        <dbReference type="Rhea" id="RHEA:24400"/>
        <dbReference type="ChEBI" id="CHEBI:30616"/>
        <dbReference type="ChEBI" id="CHEBI:57865"/>
        <dbReference type="ChEBI" id="CHEBI:58223"/>
        <dbReference type="ChEBI" id="CHEBI:456216"/>
        <dbReference type="EC" id="2.7.4.22"/>
    </reaction>
</comment>
<comment type="activity regulation">
    <text evidence="1">Allosterically activated by GTP. Inhibited by UTP.</text>
</comment>
<comment type="pathway">
    <text evidence="1">Pyrimidine metabolism; CTP biosynthesis via de novo pathway; UDP from UMP (UMPK route): step 1/1.</text>
</comment>
<comment type="subunit">
    <text evidence="1">Homohexamer.</text>
</comment>
<comment type="subcellular location">
    <subcellularLocation>
        <location evidence="1">Cytoplasm</location>
    </subcellularLocation>
</comment>
<comment type="similarity">
    <text evidence="1">Belongs to the UMP kinase family.</text>
</comment>
<evidence type="ECO:0000255" key="1">
    <source>
        <dbReference type="HAMAP-Rule" id="MF_01220"/>
    </source>
</evidence>
<organism>
    <name type="scientific">Desulforamulus reducens (strain ATCC BAA-1160 / DSM 100696 / MI-1)</name>
    <name type="common">Desulfotomaculum reducens</name>
    <dbReference type="NCBI Taxonomy" id="349161"/>
    <lineage>
        <taxon>Bacteria</taxon>
        <taxon>Bacillati</taxon>
        <taxon>Bacillota</taxon>
        <taxon>Clostridia</taxon>
        <taxon>Eubacteriales</taxon>
        <taxon>Peptococcaceae</taxon>
        <taxon>Desulforamulus</taxon>
    </lineage>
</organism>
<dbReference type="EC" id="2.7.4.22" evidence="1"/>
<dbReference type="EMBL" id="CP000612">
    <property type="protein sequence ID" value="ABO50494.1"/>
    <property type="molecule type" value="Genomic_DNA"/>
</dbReference>
<dbReference type="RefSeq" id="WP_011878304.1">
    <property type="nucleotide sequence ID" value="NC_009253.1"/>
</dbReference>
<dbReference type="SMR" id="A4J5Z1"/>
<dbReference type="STRING" id="349161.Dred_1976"/>
<dbReference type="KEGG" id="drm:Dred_1976"/>
<dbReference type="eggNOG" id="COG0528">
    <property type="taxonomic scope" value="Bacteria"/>
</dbReference>
<dbReference type="HOGENOM" id="CLU_033861_0_0_9"/>
<dbReference type="OrthoDB" id="9807458at2"/>
<dbReference type="UniPathway" id="UPA00159">
    <property type="reaction ID" value="UER00275"/>
</dbReference>
<dbReference type="Proteomes" id="UP000001556">
    <property type="component" value="Chromosome"/>
</dbReference>
<dbReference type="GO" id="GO:0005737">
    <property type="term" value="C:cytoplasm"/>
    <property type="evidence" value="ECO:0007669"/>
    <property type="project" value="UniProtKB-SubCell"/>
</dbReference>
<dbReference type="GO" id="GO:0005524">
    <property type="term" value="F:ATP binding"/>
    <property type="evidence" value="ECO:0007669"/>
    <property type="project" value="UniProtKB-KW"/>
</dbReference>
<dbReference type="GO" id="GO:0033862">
    <property type="term" value="F:UMP kinase activity"/>
    <property type="evidence" value="ECO:0007669"/>
    <property type="project" value="UniProtKB-EC"/>
</dbReference>
<dbReference type="GO" id="GO:0044210">
    <property type="term" value="P:'de novo' CTP biosynthetic process"/>
    <property type="evidence" value="ECO:0007669"/>
    <property type="project" value="UniProtKB-UniRule"/>
</dbReference>
<dbReference type="GO" id="GO:0006225">
    <property type="term" value="P:UDP biosynthetic process"/>
    <property type="evidence" value="ECO:0007669"/>
    <property type="project" value="TreeGrafter"/>
</dbReference>
<dbReference type="CDD" id="cd04254">
    <property type="entry name" value="AAK_UMPK-PyrH-Ec"/>
    <property type="match status" value="1"/>
</dbReference>
<dbReference type="FunFam" id="3.40.1160.10:FF:000001">
    <property type="entry name" value="Uridylate kinase"/>
    <property type="match status" value="1"/>
</dbReference>
<dbReference type="Gene3D" id="3.40.1160.10">
    <property type="entry name" value="Acetylglutamate kinase-like"/>
    <property type="match status" value="1"/>
</dbReference>
<dbReference type="HAMAP" id="MF_01220_B">
    <property type="entry name" value="PyrH_B"/>
    <property type="match status" value="1"/>
</dbReference>
<dbReference type="InterPro" id="IPR036393">
    <property type="entry name" value="AceGlu_kinase-like_sf"/>
</dbReference>
<dbReference type="InterPro" id="IPR001048">
    <property type="entry name" value="Asp/Glu/Uridylate_kinase"/>
</dbReference>
<dbReference type="InterPro" id="IPR011817">
    <property type="entry name" value="Uridylate_kinase"/>
</dbReference>
<dbReference type="InterPro" id="IPR015963">
    <property type="entry name" value="Uridylate_kinase_bac"/>
</dbReference>
<dbReference type="NCBIfam" id="TIGR02075">
    <property type="entry name" value="pyrH_bact"/>
    <property type="match status" value="1"/>
</dbReference>
<dbReference type="PANTHER" id="PTHR42833">
    <property type="entry name" value="URIDYLATE KINASE"/>
    <property type="match status" value="1"/>
</dbReference>
<dbReference type="PANTHER" id="PTHR42833:SF4">
    <property type="entry name" value="URIDYLATE KINASE PUMPKIN, CHLOROPLASTIC"/>
    <property type="match status" value="1"/>
</dbReference>
<dbReference type="Pfam" id="PF00696">
    <property type="entry name" value="AA_kinase"/>
    <property type="match status" value="1"/>
</dbReference>
<dbReference type="PIRSF" id="PIRSF005650">
    <property type="entry name" value="Uridylate_kin"/>
    <property type="match status" value="1"/>
</dbReference>
<dbReference type="SUPFAM" id="SSF53633">
    <property type="entry name" value="Carbamate kinase-like"/>
    <property type="match status" value="1"/>
</dbReference>
<gene>
    <name evidence="1" type="primary">pyrH</name>
    <name type="ordered locus">Dred_1976</name>
</gene>